<protein>
    <recommendedName>
        <fullName>UPF0754 membrane protein SYNPCC7002_A1087</fullName>
    </recommendedName>
</protein>
<comment type="subcellular location">
    <subcellularLocation>
        <location evidence="1">Cell inner membrane</location>
        <topology evidence="1">Single-pass membrane protein</topology>
    </subcellularLocation>
</comment>
<comment type="similarity">
    <text evidence="3">Belongs to the UPF0754 family.</text>
</comment>
<comment type="sequence caution" evidence="3">
    <conflict type="erroneous initiation">
        <sequence resource="EMBL-CDS" id="ACA99089"/>
    </conflict>
</comment>
<evidence type="ECO:0000250" key="1"/>
<evidence type="ECO:0000255" key="2"/>
<evidence type="ECO:0000305" key="3"/>
<sequence length="406" mass="46279">MNFWTLLLPPIAGTVIGYFTNDIAINMLFRPYKAIYIGDRRLPFTPGLIPANQDRLARNISRIIMGSLLTPEEIQKLAQKLLQTERIEAAIRWLLQLAFAQIQGEQEQKTAGILAAILRDLASESLPRLIKVWSREDTFLEAQVYQIFDQLLLDFKLTEAQARQLTDWLLRTVLTPDILRQATIDFLTDKNIEIIDTSLREKTSGTYWVVANLFGVKNSLTRLRAFCLEEREIANARLQELILTLEIRLKLRLWLQGLSLQNLPVSTVRQLRKSFHQTIRQYFQNKGAGLMEYIGESVDWDNLSVVILRRLQASQVLDSSLGVVSQELSLLLDRYLEKDLEKIISQVIPILAIDQVIIERVNNTSPRELERAIQGIVKNELQAIVNLGGVLGFLVGVAQSVILLLN</sequence>
<organism>
    <name type="scientific">Picosynechococcus sp. (strain ATCC 27264 / PCC 7002 / PR-6)</name>
    <name type="common">Agmenellum quadruplicatum</name>
    <dbReference type="NCBI Taxonomy" id="32049"/>
    <lineage>
        <taxon>Bacteria</taxon>
        <taxon>Bacillati</taxon>
        <taxon>Cyanobacteriota</taxon>
        <taxon>Cyanophyceae</taxon>
        <taxon>Oscillatoriophycideae</taxon>
        <taxon>Chroococcales</taxon>
        <taxon>Geminocystaceae</taxon>
        <taxon>Picosynechococcus</taxon>
    </lineage>
</organism>
<feature type="chain" id="PRO_0000388325" description="UPF0754 membrane protein SYNPCC7002_A1087">
    <location>
        <begin position="1"/>
        <end position="406"/>
    </location>
</feature>
<feature type="transmembrane region" description="Helical" evidence="2">
    <location>
        <begin position="384"/>
        <end position="404"/>
    </location>
</feature>
<reference key="1">
    <citation type="submission" date="2008-02" db="EMBL/GenBank/DDBJ databases">
        <title>Complete sequence of Synechococcus sp. PCC 7002.</title>
        <authorList>
            <person name="Li T."/>
            <person name="Zhao J."/>
            <person name="Zhao C."/>
            <person name="Liu Z."/>
            <person name="Zhao F."/>
            <person name="Marquardt J."/>
            <person name="Nomura C.T."/>
            <person name="Persson S."/>
            <person name="Detter J.C."/>
            <person name="Richardson P.M."/>
            <person name="Lanz C."/>
            <person name="Schuster S.C."/>
            <person name="Wang J."/>
            <person name="Li S."/>
            <person name="Huang X."/>
            <person name="Cai T."/>
            <person name="Yu Z."/>
            <person name="Luo J."/>
            <person name="Zhao J."/>
            <person name="Bryant D.A."/>
        </authorList>
    </citation>
    <scope>NUCLEOTIDE SEQUENCE [LARGE SCALE GENOMIC DNA]</scope>
    <source>
        <strain>ATCC 27264 / PCC 7002 / PR-6</strain>
    </source>
</reference>
<dbReference type="EMBL" id="CP000951">
    <property type="protein sequence ID" value="ACA99089.1"/>
    <property type="status" value="ALT_INIT"/>
    <property type="molecule type" value="Genomic_DNA"/>
</dbReference>
<dbReference type="RefSeq" id="WP_041443420.1">
    <property type="nucleotide sequence ID" value="NZ_JAHHPU010000001.1"/>
</dbReference>
<dbReference type="STRING" id="32049.SYNPCC7002_A1087"/>
<dbReference type="KEGG" id="syp:SYNPCC7002_A1087"/>
<dbReference type="eggNOG" id="COG4399">
    <property type="taxonomic scope" value="Bacteria"/>
</dbReference>
<dbReference type="HOGENOM" id="CLU_042384_0_1_3"/>
<dbReference type="Proteomes" id="UP000001688">
    <property type="component" value="Chromosome"/>
</dbReference>
<dbReference type="GO" id="GO:0005886">
    <property type="term" value="C:plasma membrane"/>
    <property type="evidence" value="ECO:0007669"/>
    <property type="project" value="UniProtKB-SubCell"/>
</dbReference>
<dbReference type="InterPro" id="IPR007383">
    <property type="entry name" value="DUF445"/>
</dbReference>
<dbReference type="InterPro" id="IPR016991">
    <property type="entry name" value="UCP032178"/>
</dbReference>
<dbReference type="PANTHER" id="PTHR35791">
    <property type="entry name" value="UPF0754 MEMBRANE PROTEIN YHEB"/>
    <property type="match status" value="1"/>
</dbReference>
<dbReference type="PANTHER" id="PTHR35791:SF1">
    <property type="entry name" value="UPF0754 MEMBRANE PROTEIN YHEB"/>
    <property type="match status" value="1"/>
</dbReference>
<dbReference type="Pfam" id="PF04286">
    <property type="entry name" value="DUF445"/>
    <property type="match status" value="1"/>
</dbReference>
<dbReference type="PIRSF" id="PIRSF032178">
    <property type="entry name" value="UCP032178"/>
    <property type="match status" value="1"/>
</dbReference>
<name>Y1087_PICP2</name>
<keyword id="KW-0997">Cell inner membrane</keyword>
<keyword id="KW-1003">Cell membrane</keyword>
<keyword id="KW-0472">Membrane</keyword>
<keyword id="KW-1185">Reference proteome</keyword>
<keyword id="KW-0812">Transmembrane</keyword>
<keyword id="KW-1133">Transmembrane helix</keyword>
<accession>B1XJW1</accession>
<gene>
    <name type="ordered locus">SYNPCC7002_A1087</name>
</gene>
<proteinExistence type="inferred from homology"/>